<name>PNCB_BURA4</name>
<comment type="function">
    <text evidence="1">Catalyzes the synthesis of beta-nicotinate D-ribonucleotide from nicotinate and 5-phospho-D-ribose 1-phosphate at the expense of ATP.</text>
</comment>
<comment type="catalytic activity">
    <reaction evidence="1">
        <text>nicotinate + 5-phospho-alpha-D-ribose 1-diphosphate + ATP + H2O = nicotinate beta-D-ribonucleotide + ADP + phosphate + diphosphate</text>
        <dbReference type="Rhea" id="RHEA:36163"/>
        <dbReference type="ChEBI" id="CHEBI:15377"/>
        <dbReference type="ChEBI" id="CHEBI:30616"/>
        <dbReference type="ChEBI" id="CHEBI:32544"/>
        <dbReference type="ChEBI" id="CHEBI:33019"/>
        <dbReference type="ChEBI" id="CHEBI:43474"/>
        <dbReference type="ChEBI" id="CHEBI:57502"/>
        <dbReference type="ChEBI" id="CHEBI:58017"/>
        <dbReference type="ChEBI" id="CHEBI:456216"/>
        <dbReference type="EC" id="6.3.4.21"/>
    </reaction>
</comment>
<comment type="pathway">
    <text evidence="1">Cofactor biosynthesis; NAD(+) biosynthesis; nicotinate D-ribonucleotide from nicotinate: step 1/1.</text>
</comment>
<comment type="PTM">
    <text evidence="1">Transiently phosphorylated on a His residue during the reaction cycle. Phosphorylation strongly increases the affinity for substrates and increases the rate of nicotinate D-ribonucleotide production. Dephosphorylation regenerates the low-affinity form of the enzyme, leading to product release.</text>
</comment>
<comment type="similarity">
    <text evidence="1">Belongs to the NAPRTase family.</text>
</comment>
<sequence>MIITSLLDTDLYKFTMMQVVLHHFPAANVEYRFRCRTPGVDLVPYIDEIRDEVRGLCSLRFTDIELDYLRRMRFIKSDFVDFLALFHLNEKYISITPSPKGNGEIDIVIEGPWLHTILFEIPVLAIVNEVYFRNTQREPDYREGRERLREKIKLLGAKPEFADCKIADYGTRRRFSKVWHEEVALTLRDGLGPQFAGTSNVFYAMKHELTPLGTMAHEYLQACQALGPRLRDSQTYGFEMWAKEYRGDLGIALSDVYGMDAFLNDFDMYFCKLFDGARHDSGDPFEWGERMLRHYEANRCDPRTKVLVFSDALDIPKVMQLYERFRNRCKLAFGVGTNLTNDLGYVPLQIVIKMVRCNGQPVAKLSDSPGKSMCDDRAYLAYLRQVFGIAQPVDDDASQ</sequence>
<evidence type="ECO:0000255" key="1">
    <source>
        <dbReference type="HAMAP-Rule" id="MF_00570"/>
    </source>
</evidence>
<accession>B1YVJ0</accession>
<organism>
    <name type="scientific">Burkholderia ambifaria (strain MC40-6)</name>
    <dbReference type="NCBI Taxonomy" id="398577"/>
    <lineage>
        <taxon>Bacteria</taxon>
        <taxon>Pseudomonadati</taxon>
        <taxon>Pseudomonadota</taxon>
        <taxon>Betaproteobacteria</taxon>
        <taxon>Burkholderiales</taxon>
        <taxon>Burkholderiaceae</taxon>
        <taxon>Burkholderia</taxon>
        <taxon>Burkholderia cepacia complex</taxon>
    </lineage>
</organism>
<protein>
    <recommendedName>
        <fullName evidence="1">Nicotinate phosphoribosyltransferase</fullName>
        <shortName evidence="1">NAPRTase</shortName>
        <ecNumber evidence="1">6.3.4.21</ecNumber>
    </recommendedName>
</protein>
<gene>
    <name evidence="1" type="primary">pncB</name>
    <name type="ordered locus">BamMC406_0980</name>
</gene>
<proteinExistence type="inferred from homology"/>
<dbReference type="EC" id="6.3.4.21" evidence="1"/>
<dbReference type="EMBL" id="CP001025">
    <property type="protein sequence ID" value="ACB63471.1"/>
    <property type="molecule type" value="Genomic_DNA"/>
</dbReference>
<dbReference type="RefSeq" id="WP_012363386.1">
    <property type="nucleotide sequence ID" value="NC_010551.1"/>
</dbReference>
<dbReference type="SMR" id="B1YVJ0"/>
<dbReference type="KEGG" id="bac:BamMC406_0980"/>
<dbReference type="HOGENOM" id="CLU_030991_1_0_4"/>
<dbReference type="OrthoDB" id="9771406at2"/>
<dbReference type="UniPathway" id="UPA00253">
    <property type="reaction ID" value="UER00457"/>
</dbReference>
<dbReference type="Proteomes" id="UP000001680">
    <property type="component" value="Chromosome 1"/>
</dbReference>
<dbReference type="GO" id="GO:0005829">
    <property type="term" value="C:cytosol"/>
    <property type="evidence" value="ECO:0007669"/>
    <property type="project" value="TreeGrafter"/>
</dbReference>
<dbReference type="GO" id="GO:0004516">
    <property type="term" value="F:nicotinate phosphoribosyltransferase activity"/>
    <property type="evidence" value="ECO:0007669"/>
    <property type="project" value="UniProtKB-UniRule"/>
</dbReference>
<dbReference type="GO" id="GO:0034355">
    <property type="term" value="P:NAD biosynthetic process via the salvage pathway"/>
    <property type="evidence" value="ECO:0007669"/>
    <property type="project" value="TreeGrafter"/>
</dbReference>
<dbReference type="CDD" id="cd01401">
    <property type="entry name" value="PncB_like"/>
    <property type="match status" value="1"/>
</dbReference>
<dbReference type="Gene3D" id="3.20.140.10">
    <property type="entry name" value="nicotinate phosphoribosyltransferase"/>
    <property type="match status" value="1"/>
</dbReference>
<dbReference type="HAMAP" id="MF_00570">
    <property type="entry name" value="NAPRTase"/>
    <property type="match status" value="1"/>
</dbReference>
<dbReference type="InterPro" id="IPR041525">
    <property type="entry name" value="N/Namide_PRibTrfase"/>
</dbReference>
<dbReference type="InterPro" id="IPR040727">
    <property type="entry name" value="NAPRTase_N"/>
</dbReference>
<dbReference type="InterPro" id="IPR006406">
    <property type="entry name" value="Nic_PRibTrfase"/>
</dbReference>
<dbReference type="InterPro" id="IPR007229">
    <property type="entry name" value="Nic_PRibTrfase-Fam"/>
</dbReference>
<dbReference type="InterPro" id="IPR036068">
    <property type="entry name" value="Nicotinate_pribotase-like_C"/>
</dbReference>
<dbReference type="NCBIfam" id="TIGR01514">
    <property type="entry name" value="NAPRTase"/>
    <property type="match status" value="1"/>
</dbReference>
<dbReference type="NCBIfam" id="NF003704">
    <property type="entry name" value="PRK05321.1"/>
    <property type="match status" value="1"/>
</dbReference>
<dbReference type="PANTHER" id="PTHR11098">
    <property type="entry name" value="NICOTINATE PHOSPHORIBOSYLTRANSFERASE"/>
    <property type="match status" value="1"/>
</dbReference>
<dbReference type="PANTHER" id="PTHR11098:SF1">
    <property type="entry name" value="NICOTINATE PHOSPHORIBOSYLTRANSFERASE"/>
    <property type="match status" value="1"/>
</dbReference>
<dbReference type="Pfam" id="PF04095">
    <property type="entry name" value="NAPRTase"/>
    <property type="match status" value="1"/>
</dbReference>
<dbReference type="Pfam" id="PF17767">
    <property type="entry name" value="NAPRTase_N"/>
    <property type="match status" value="1"/>
</dbReference>
<dbReference type="PIRSF" id="PIRSF000484">
    <property type="entry name" value="NAPRT"/>
    <property type="match status" value="1"/>
</dbReference>
<dbReference type="SUPFAM" id="SSF51690">
    <property type="entry name" value="Nicotinate/Quinolinate PRTase C-terminal domain-like"/>
    <property type="match status" value="1"/>
</dbReference>
<dbReference type="SUPFAM" id="SSF54675">
    <property type="entry name" value="Nicotinate/Quinolinate PRTase N-terminal domain-like"/>
    <property type="match status" value="1"/>
</dbReference>
<feature type="chain" id="PRO_1000129463" description="Nicotinate phosphoribosyltransferase">
    <location>
        <begin position="1"/>
        <end position="399"/>
    </location>
</feature>
<feature type="modified residue" description="Phosphohistidine; by autocatalysis" evidence="1">
    <location>
        <position position="217"/>
    </location>
</feature>
<keyword id="KW-0436">Ligase</keyword>
<keyword id="KW-0597">Phosphoprotein</keyword>
<keyword id="KW-0662">Pyridine nucleotide biosynthesis</keyword>
<reference key="1">
    <citation type="submission" date="2008-04" db="EMBL/GenBank/DDBJ databases">
        <title>Complete sequence of chromosome 1 of Burkholderia ambifaria MC40-6.</title>
        <authorList>
            <person name="Copeland A."/>
            <person name="Lucas S."/>
            <person name="Lapidus A."/>
            <person name="Glavina del Rio T."/>
            <person name="Dalin E."/>
            <person name="Tice H."/>
            <person name="Pitluck S."/>
            <person name="Chain P."/>
            <person name="Malfatti S."/>
            <person name="Shin M."/>
            <person name="Vergez L."/>
            <person name="Lang D."/>
            <person name="Schmutz J."/>
            <person name="Larimer F."/>
            <person name="Land M."/>
            <person name="Hauser L."/>
            <person name="Kyrpides N."/>
            <person name="Lykidis A."/>
            <person name="Ramette A."/>
            <person name="Konstantinidis K."/>
            <person name="Tiedje J."/>
            <person name="Richardson P."/>
        </authorList>
    </citation>
    <scope>NUCLEOTIDE SEQUENCE [LARGE SCALE GENOMIC DNA]</scope>
    <source>
        <strain>MC40-6</strain>
    </source>
</reference>